<comment type="subcellular location">
    <subcellularLocation>
        <location evidence="5">Secreted</location>
    </subcellularLocation>
</comment>
<comment type="similarity">
    <text evidence="2">Belongs to the peptidase S1 family. Plasma kallikrein subfamily.</text>
</comment>
<comment type="caution">
    <text evidence="5">Although related to peptidase S1 family, lacks the essential His, Asp, and Ser residues of the catalytic triad at positions 83, 129 and 221 and is therefore predicted to have lost protease activity.</text>
</comment>
<feature type="signal peptide" evidence="1">
    <location>
        <begin position="1"/>
        <end position="30"/>
    </location>
</feature>
<feature type="chain" id="PRO_0000288801" description="Inactive serine protease 54">
    <location>
        <begin position="31"/>
        <end position="395"/>
    </location>
</feature>
<feature type="domain" description="Peptidase S1" evidence="2">
    <location>
        <begin position="37"/>
        <end position="269"/>
    </location>
</feature>
<feature type="region of interest" description="Disordered" evidence="3">
    <location>
        <begin position="324"/>
        <end position="348"/>
    </location>
</feature>
<feature type="compositionally biased region" description="Basic and acidic residues" evidence="3">
    <location>
        <begin position="331"/>
        <end position="345"/>
    </location>
</feature>
<feature type="glycosylation site" description="N-linked (GlcNAc...) asparagine" evidence="1">
    <location>
        <position position="123"/>
    </location>
</feature>
<feature type="glycosylation site" description="N-linked (GlcNAc...) asparagine" evidence="1">
    <location>
        <position position="327"/>
    </location>
</feature>
<feature type="disulfide bond" evidence="2">
    <location>
        <begin position="164"/>
        <end position="227"/>
    </location>
</feature>
<feature type="disulfide bond" evidence="2">
    <location>
        <begin position="195"/>
        <end position="205"/>
    </location>
</feature>
<feature type="disulfide bond" evidence="2">
    <location>
        <begin position="217"/>
        <end position="248"/>
    </location>
</feature>
<feature type="sequence variant" id="VAR_032497" description="In dbSNP:rs3815803." evidence="4">
    <original>S</original>
    <variation>G</variation>
    <location>
        <position position="182"/>
    </location>
</feature>
<feature type="sequence variant" id="VAR_032498" description="In dbSNP:rs1052276." evidence="4">
    <original>V</original>
    <variation>I</variation>
    <location>
        <position position="240"/>
    </location>
</feature>
<feature type="sequence variant" id="VAR_032499" description="In dbSNP:rs2241414." evidence="4">
    <original>T</original>
    <variation>A</variation>
    <location>
        <position position="295"/>
    </location>
</feature>
<evidence type="ECO:0000255" key="1"/>
<evidence type="ECO:0000255" key="2">
    <source>
        <dbReference type="PROSITE-ProRule" id="PRU00274"/>
    </source>
</evidence>
<evidence type="ECO:0000256" key="3">
    <source>
        <dbReference type="SAM" id="MobiDB-lite"/>
    </source>
</evidence>
<evidence type="ECO:0000269" key="4">
    <source>
    </source>
</evidence>
<evidence type="ECO:0000305" key="5"/>
<protein>
    <recommendedName>
        <fullName>Inactive serine protease 54</fullName>
    </recommendedName>
    <alternativeName>
        <fullName>Cancer/testis antigen 67</fullName>
        <shortName>CT67</shortName>
    </alternativeName>
    <alternativeName>
        <fullName>Plasma kallikrein-like protein 4</fullName>
    </alternativeName>
</protein>
<keyword id="KW-1015">Disulfide bond</keyword>
<keyword id="KW-0325">Glycoprotein</keyword>
<keyword id="KW-1267">Proteomics identification</keyword>
<keyword id="KW-1185">Reference proteome</keyword>
<keyword id="KW-0964">Secreted</keyword>
<keyword id="KW-0721">Serine protease homolog</keyword>
<keyword id="KW-0732">Signal</keyword>
<organism>
    <name type="scientific">Homo sapiens</name>
    <name type="common">Human</name>
    <dbReference type="NCBI Taxonomy" id="9606"/>
    <lineage>
        <taxon>Eukaryota</taxon>
        <taxon>Metazoa</taxon>
        <taxon>Chordata</taxon>
        <taxon>Craniata</taxon>
        <taxon>Vertebrata</taxon>
        <taxon>Euteleostomi</taxon>
        <taxon>Mammalia</taxon>
        <taxon>Eutheria</taxon>
        <taxon>Euarchontoglires</taxon>
        <taxon>Primates</taxon>
        <taxon>Haplorrhini</taxon>
        <taxon>Catarrhini</taxon>
        <taxon>Hominidae</taxon>
        <taxon>Homo</taxon>
    </lineage>
</organism>
<reference key="1">
    <citation type="journal article" date="2004" name="Nat. Genet.">
        <title>Complete sequencing and characterization of 21,243 full-length human cDNAs.</title>
        <authorList>
            <person name="Ota T."/>
            <person name="Suzuki Y."/>
            <person name="Nishikawa T."/>
            <person name="Otsuki T."/>
            <person name="Sugiyama T."/>
            <person name="Irie R."/>
            <person name="Wakamatsu A."/>
            <person name="Hayashi K."/>
            <person name="Sato H."/>
            <person name="Nagai K."/>
            <person name="Kimura K."/>
            <person name="Makita H."/>
            <person name="Sekine M."/>
            <person name="Obayashi M."/>
            <person name="Nishi T."/>
            <person name="Shibahara T."/>
            <person name="Tanaka T."/>
            <person name="Ishii S."/>
            <person name="Yamamoto J."/>
            <person name="Saito K."/>
            <person name="Kawai Y."/>
            <person name="Isono Y."/>
            <person name="Nakamura Y."/>
            <person name="Nagahari K."/>
            <person name="Murakami K."/>
            <person name="Yasuda T."/>
            <person name="Iwayanagi T."/>
            <person name="Wagatsuma M."/>
            <person name="Shiratori A."/>
            <person name="Sudo H."/>
            <person name="Hosoiri T."/>
            <person name="Kaku Y."/>
            <person name="Kodaira H."/>
            <person name="Kondo H."/>
            <person name="Sugawara M."/>
            <person name="Takahashi M."/>
            <person name="Kanda K."/>
            <person name="Yokoi T."/>
            <person name="Furuya T."/>
            <person name="Kikkawa E."/>
            <person name="Omura Y."/>
            <person name="Abe K."/>
            <person name="Kamihara K."/>
            <person name="Katsuta N."/>
            <person name="Sato K."/>
            <person name="Tanikawa M."/>
            <person name="Yamazaki M."/>
            <person name="Ninomiya K."/>
            <person name="Ishibashi T."/>
            <person name="Yamashita H."/>
            <person name="Murakawa K."/>
            <person name="Fujimori K."/>
            <person name="Tanai H."/>
            <person name="Kimata M."/>
            <person name="Watanabe M."/>
            <person name="Hiraoka S."/>
            <person name="Chiba Y."/>
            <person name="Ishida S."/>
            <person name="Ono Y."/>
            <person name="Takiguchi S."/>
            <person name="Watanabe S."/>
            <person name="Yosida M."/>
            <person name="Hotuta T."/>
            <person name="Kusano J."/>
            <person name="Kanehori K."/>
            <person name="Takahashi-Fujii A."/>
            <person name="Hara H."/>
            <person name="Tanase T.-O."/>
            <person name="Nomura Y."/>
            <person name="Togiya S."/>
            <person name="Komai F."/>
            <person name="Hara R."/>
            <person name="Takeuchi K."/>
            <person name="Arita M."/>
            <person name="Imose N."/>
            <person name="Musashino K."/>
            <person name="Yuuki H."/>
            <person name="Oshima A."/>
            <person name="Sasaki N."/>
            <person name="Aotsuka S."/>
            <person name="Yoshikawa Y."/>
            <person name="Matsunawa H."/>
            <person name="Ichihara T."/>
            <person name="Shiohata N."/>
            <person name="Sano S."/>
            <person name="Moriya S."/>
            <person name="Momiyama H."/>
            <person name="Satoh N."/>
            <person name="Takami S."/>
            <person name="Terashima Y."/>
            <person name="Suzuki O."/>
            <person name="Nakagawa S."/>
            <person name="Senoh A."/>
            <person name="Mizoguchi H."/>
            <person name="Goto Y."/>
            <person name="Shimizu F."/>
            <person name="Wakebe H."/>
            <person name="Hishigaki H."/>
            <person name="Watanabe T."/>
            <person name="Sugiyama A."/>
            <person name="Takemoto M."/>
            <person name="Kawakami B."/>
            <person name="Yamazaki M."/>
            <person name="Watanabe K."/>
            <person name="Kumagai A."/>
            <person name="Itakura S."/>
            <person name="Fukuzumi Y."/>
            <person name="Fujimori Y."/>
            <person name="Komiyama M."/>
            <person name="Tashiro H."/>
            <person name="Tanigami A."/>
            <person name="Fujiwara T."/>
            <person name="Ono T."/>
            <person name="Yamada K."/>
            <person name="Fujii Y."/>
            <person name="Ozaki K."/>
            <person name="Hirao M."/>
            <person name="Ohmori Y."/>
            <person name="Kawabata A."/>
            <person name="Hikiji T."/>
            <person name="Kobatake N."/>
            <person name="Inagaki H."/>
            <person name="Ikema Y."/>
            <person name="Okamoto S."/>
            <person name="Okitani R."/>
            <person name="Kawakami T."/>
            <person name="Noguchi S."/>
            <person name="Itoh T."/>
            <person name="Shigeta K."/>
            <person name="Senba T."/>
            <person name="Matsumura K."/>
            <person name="Nakajima Y."/>
            <person name="Mizuno T."/>
            <person name="Morinaga M."/>
            <person name="Sasaki M."/>
            <person name="Togashi T."/>
            <person name="Oyama M."/>
            <person name="Hata H."/>
            <person name="Watanabe M."/>
            <person name="Komatsu T."/>
            <person name="Mizushima-Sugano J."/>
            <person name="Satoh T."/>
            <person name="Shirai Y."/>
            <person name="Takahashi Y."/>
            <person name="Nakagawa K."/>
            <person name="Okumura K."/>
            <person name="Nagase T."/>
            <person name="Nomura N."/>
            <person name="Kikuchi H."/>
            <person name="Masuho Y."/>
            <person name="Yamashita R."/>
            <person name="Nakai K."/>
            <person name="Yada T."/>
            <person name="Nakamura Y."/>
            <person name="Ohara O."/>
            <person name="Isogai T."/>
            <person name="Sugano S."/>
        </authorList>
    </citation>
    <scope>NUCLEOTIDE SEQUENCE [LARGE SCALE MRNA]</scope>
    <scope>VARIANTS GLY-182; ILE-240 AND ALA-295</scope>
    <source>
        <tissue>Testis</tissue>
    </source>
</reference>
<reference key="2">
    <citation type="journal article" date="2004" name="Genome Res.">
        <title>The status, quality, and expansion of the NIH full-length cDNA project: the Mammalian Gene Collection (MGC).</title>
        <authorList>
            <consortium name="The MGC Project Team"/>
        </authorList>
    </citation>
    <scope>NUCLEOTIDE SEQUENCE [LARGE SCALE MRNA]</scope>
    <source>
        <tissue>Testis</tissue>
    </source>
</reference>
<reference key="3">
    <citation type="journal article" date="2007" name="BMC Genomics">
        <title>The full-ORF clone resource of the German cDNA consortium.</title>
        <authorList>
            <person name="Bechtel S."/>
            <person name="Rosenfelder H."/>
            <person name="Duda A."/>
            <person name="Schmidt C.P."/>
            <person name="Ernst U."/>
            <person name="Wellenreuther R."/>
            <person name="Mehrle A."/>
            <person name="Schuster C."/>
            <person name="Bahr A."/>
            <person name="Bloecker H."/>
            <person name="Heubner D."/>
            <person name="Hoerlein A."/>
            <person name="Michel G."/>
            <person name="Wedler H."/>
            <person name="Koehrer K."/>
            <person name="Ottenwaelder B."/>
            <person name="Poustka A."/>
            <person name="Wiemann S."/>
            <person name="Schupp I."/>
        </authorList>
    </citation>
    <scope>NUCLEOTIDE SEQUENCE [LARGE SCALE MRNA] OF 106-395</scope>
    <source>
        <tissue>Testis</tissue>
    </source>
</reference>
<gene>
    <name type="primary">PRSS54</name>
    <name type="synonym">KLKBL4</name>
</gene>
<proteinExistence type="evidence at protein level"/>
<accession>Q6PEW0</accession>
<accession>Q96LN9</accession>
<accession>Q9NT77</accession>
<sequence length="395" mass="43832">MVSAAGLSGDGKMRGVLLVLLGLLYSSTSCGVQKASVFYGPDPKEGLVSSMEFPWVVSLQDSQYTHLAFGCILSEFWVLSIASAIQNRKDIVVIVGISNMDPSKIAHTEYPVNTIIIHEDFDNNSMSNNIALLKTDTAMHFGNLVQSICFLGRMLHTPPVLQNCWVSGWNPTSATGNHMTMSVLRKIFVKDLDMCPLYKLQKTECGSHTKEETKTACLGDPGSPMMCQLQQFDLWVLRGVLNFGGETCPGLFLYTKVEDYSKWITSKAERAGPPLSSLHHWEKLISFSHHGPNATMTQKTYSDSELGHVGSYLQGQRRTITHSRLGNSSRDSLDVREKDVKESGRSPEASVQPLYYDYYGGEVGEGRIFAGQNRLYQPEEIILVSFVLVFFCSSI</sequence>
<name>PRS54_HUMAN</name>
<dbReference type="EMBL" id="AK058068">
    <property type="protein sequence ID" value="BAB71649.1"/>
    <property type="molecule type" value="mRNA"/>
</dbReference>
<dbReference type="EMBL" id="BC057843">
    <property type="protein sequence ID" value="AAH57843.2"/>
    <property type="molecule type" value="mRNA"/>
</dbReference>
<dbReference type="EMBL" id="AL137484">
    <property type="protein sequence ID" value="CAB70765.1"/>
    <property type="molecule type" value="mRNA"/>
</dbReference>
<dbReference type="CCDS" id="CCDS32463.1"/>
<dbReference type="PIR" id="T46470">
    <property type="entry name" value="T46470"/>
</dbReference>
<dbReference type="RefSeq" id="NP_001073961.1">
    <property type="nucleotide sequence ID" value="NM_001080492.2"/>
</dbReference>
<dbReference type="RefSeq" id="NP_001292102.1">
    <property type="nucleotide sequence ID" value="NM_001305173.2"/>
</dbReference>
<dbReference type="SMR" id="Q6PEW0"/>
<dbReference type="FunCoup" id="Q6PEW0">
    <property type="interactions" value="146"/>
</dbReference>
<dbReference type="STRING" id="9606.ENSP00000219301"/>
<dbReference type="MEROPS" id="S01.992"/>
<dbReference type="GlyCosmos" id="Q6PEW0">
    <property type="glycosylation" value="2 sites, No reported glycans"/>
</dbReference>
<dbReference type="GlyGen" id="Q6PEW0">
    <property type="glycosylation" value="3 sites, 2 N-linked glycans (1 site)"/>
</dbReference>
<dbReference type="BioMuta" id="PRSS54"/>
<dbReference type="DMDM" id="148876818"/>
<dbReference type="MassIVE" id="Q6PEW0"/>
<dbReference type="PaxDb" id="9606-ENSP00000219301"/>
<dbReference type="PeptideAtlas" id="Q6PEW0"/>
<dbReference type="ProteomicsDB" id="67082"/>
<dbReference type="Antibodypedia" id="29072">
    <property type="antibodies" value="83 antibodies from 15 providers"/>
</dbReference>
<dbReference type="DNASU" id="221191"/>
<dbReference type="Ensembl" id="ENST00000219301.8">
    <property type="protein sequence ID" value="ENSP00000219301.4"/>
    <property type="gene ID" value="ENSG00000103023.12"/>
</dbReference>
<dbReference type="Ensembl" id="ENST00000567164.6">
    <property type="protein sequence ID" value="ENSP00000455024.1"/>
    <property type="gene ID" value="ENSG00000103023.12"/>
</dbReference>
<dbReference type="GeneID" id="221191"/>
<dbReference type="KEGG" id="hsa:221191"/>
<dbReference type="MANE-Select" id="ENST00000567164.6">
    <property type="protein sequence ID" value="ENSP00000455024.1"/>
    <property type="RefSeq nucleotide sequence ID" value="NM_001305173.2"/>
    <property type="RefSeq protein sequence ID" value="NP_001292102.1"/>
</dbReference>
<dbReference type="UCSC" id="uc002enf.3">
    <property type="organism name" value="human"/>
</dbReference>
<dbReference type="AGR" id="HGNC:26336"/>
<dbReference type="CTD" id="221191"/>
<dbReference type="DisGeNET" id="221191"/>
<dbReference type="GeneCards" id="PRSS54"/>
<dbReference type="HGNC" id="HGNC:26336">
    <property type="gene designation" value="PRSS54"/>
</dbReference>
<dbReference type="HPA" id="ENSG00000103023">
    <property type="expression patterns" value="Tissue enriched (testis)"/>
</dbReference>
<dbReference type="neXtProt" id="NX_Q6PEW0"/>
<dbReference type="OpenTargets" id="ENSG00000103023"/>
<dbReference type="PharmGKB" id="PA165450675"/>
<dbReference type="VEuPathDB" id="HostDB:ENSG00000103023"/>
<dbReference type="eggNOG" id="KOG3627">
    <property type="taxonomic scope" value="Eukaryota"/>
</dbReference>
<dbReference type="GeneTree" id="ENSGT01020000230389"/>
<dbReference type="HOGENOM" id="CLU_058835_0_0_1"/>
<dbReference type="InParanoid" id="Q6PEW0"/>
<dbReference type="OMA" id="TDTAMQF"/>
<dbReference type="OrthoDB" id="6261922at2759"/>
<dbReference type="PAN-GO" id="Q6PEW0">
    <property type="GO annotations" value="3 GO annotations based on evolutionary models"/>
</dbReference>
<dbReference type="PhylomeDB" id="Q6PEW0"/>
<dbReference type="TreeFam" id="TF338267"/>
<dbReference type="PathwayCommons" id="Q6PEW0"/>
<dbReference type="BioGRID-ORCS" id="221191">
    <property type="hits" value="14 hits in 1147 CRISPR screens"/>
</dbReference>
<dbReference type="GenomeRNAi" id="221191"/>
<dbReference type="Pharos" id="Q6PEW0">
    <property type="development level" value="Tbio"/>
</dbReference>
<dbReference type="PRO" id="PR:Q6PEW0"/>
<dbReference type="Proteomes" id="UP000005640">
    <property type="component" value="Chromosome 16"/>
</dbReference>
<dbReference type="RNAct" id="Q6PEW0">
    <property type="molecule type" value="protein"/>
</dbReference>
<dbReference type="Bgee" id="ENSG00000103023">
    <property type="expression patterns" value="Expressed in left testis and 64 other cell types or tissues"/>
</dbReference>
<dbReference type="ExpressionAtlas" id="Q6PEW0">
    <property type="expression patterns" value="baseline and differential"/>
</dbReference>
<dbReference type="GO" id="GO:0005615">
    <property type="term" value="C:extracellular space"/>
    <property type="evidence" value="ECO:0000318"/>
    <property type="project" value="GO_Central"/>
</dbReference>
<dbReference type="GO" id="GO:0004252">
    <property type="term" value="F:serine-type endopeptidase activity"/>
    <property type="evidence" value="ECO:0000318"/>
    <property type="project" value="GO_Central"/>
</dbReference>
<dbReference type="GO" id="GO:0006508">
    <property type="term" value="P:proteolysis"/>
    <property type="evidence" value="ECO:0000318"/>
    <property type="project" value="GO_Central"/>
</dbReference>
<dbReference type="CDD" id="cd00190">
    <property type="entry name" value="Tryp_SPc"/>
    <property type="match status" value="1"/>
</dbReference>
<dbReference type="FunFam" id="2.40.10.10:FF:000132">
    <property type="entry name" value="Inactive serine protease 54"/>
    <property type="match status" value="1"/>
</dbReference>
<dbReference type="FunFam" id="2.40.10.10:FF:000125">
    <property type="entry name" value="inactive serine protease 54"/>
    <property type="match status" value="1"/>
</dbReference>
<dbReference type="Gene3D" id="2.40.10.10">
    <property type="entry name" value="Trypsin-like serine proteases"/>
    <property type="match status" value="2"/>
</dbReference>
<dbReference type="InterPro" id="IPR009003">
    <property type="entry name" value="Peptidase_S1_PA"/>
</dbReference>
<dbReference type="InterPro" id="IPR043504">
    <property type="entry name" value="Peptidase_S1_PA_chymotrypsin"/>
</dbReference>
<dbReference type="InterPro" id="IPR001254">
    <property type="entry name" value="Trypsin_dom"/>
</dbReference>
<dbReference type="PANTHER" id="PTHR24250">
    <property type="entry name" value="CHYMOTRYPSIN-RELATED"/>
    <property type="match status" value="1"/>
</dbReference>
<dbReference type="PANTHER" id="PTHR24250:SF45">
    <property type="entry name" value="INACTIVE SERINE PROTEASE 54"/>
    <property type="match status" value="1"/>
</dbReference>
<dbReference type="Pfam" id="PF00089">
    <property type="entry name" value="Trypsin"/>
    <property type="match status" value="1"/>
</dbReference>
<dbReference type="SMART" id="SM00020">
    <property type="entry name" value="Tryp_SPc"/>
    <property type="match status" value="1"/>
</dbReference>
<dbReference type="SUPFAM" id="SSF50494">
    <property type="entry name" value="Trypsin-like serine proteases"/>
    <property type="match status" value="1"/>
</dbReference>
<dbReference type="PROSITE" id="PS50240">
    <property type="entry name" value="TRYPSIN_DOM"/>
    <property type="match status" value="1"/>
</dbReference>